<name>RNZ2_GORGO</name>
<organism>
    <name type="scientific">Gorilla gorilla gorilla</name>
    <name type="common">Western lowland gorilla</name>
    <dbReference type="NCBI Taxonomy" id="9595"/>
    <lineage>
        <taxon>Eukaryota</taxon>
        <taxon>Metazoa</taxon>
        <taxon>Chordata</taxon>
        <taxon>Craniata</taxon>
        <taxon>Vertebrata</taxon>
        <taxon>Euteleostomi</taxon>
        <taxon>Mammalia</taxon>
        <taxon>Eutheria</taxon>
        <taxon>Euarchontoglires</taxon>
        <taxon>Primates</taxon>
        <taxon>Haplorrhini</taxon>
        <taxon>Catarrhini</taxon>
        <taxon>Hominidae</taxon>
        <taxon>Gorilla</taxon>
    </lineage>
</organism>
<gene>
    <name type="primary">ELAC2</name>
</gene>
<comment type="function">
    <text evidence="2">Zinc phosphodiesterase, which displays mitochondrial tRNA 3'-processing endonuclease activity. Involved in tRNA maturation, by removing a 3'-trailer from precursor tRNA. Associates with mitochondrial DNA complexes at the nucleoids to initiate RNA processing and ribosome assembly.</text>
</comment>
<comment type="catalytic activity">
    <reaction evidence="2">
        <text>Endonucleolytic cleavage of RNA, removing extra 3' nucleotides from tRNA precursor, generating 3' termini of tRNAs. A 3'-hydroxy group is left at the tRNA terminus and a 5'-phosphoryl group is left at the trailer molecule.</text>
        <dbReference type="EC" id="3.1.26.11"/>
    </reaction>
</comment>
<comment type="cofactor">
    <cofactor evidence="5">
        <name>Zn(2+)</name>
        <dbReference type="ChEBI" id="CHEBI:29105"/>
    </cofactor>
</comment>
<comment type="subunit">
    <text evidence="1">Homodimer. Interacts with PTCD1.</text>
</comment>
<comment type="subcellular location">
    <subcellularLocation>
        <location evidence="2">Mitochondrion</location>
    </subcellularLocation>
    <subcellularLocation>
        <location evidence="2">Mitochondrion matrix</location>
        <location evidence="2">Mitochondrion nucleoid</location>
    </subcellularLocation>
    <subcellularLocation>
        <location evidence="2">Nucleus</location>
    </subcellularLocation>
    <text evidence="2">Mainly mitochondrial.</text>
</comment>
<comment type="similarity">
    <text evidence="5">Belongs to the RNase Z family.</text>
</comment>
<protein>
    <recommendedName>
        <fullName>Zinc phosphodiesterase ELAC protein 2</fullName>
        <ecNumber>3.1.26.11</ecNumber>
    </recommendedName>
    <alternativeName>
        <fullName>ElaC homolog protein 2</fullName>
    </alternativeName>
    <alternativeName>
        <fullName>Ribonuclease Z 2</fullName>
        <shortName>RNase Z 2</shortName>
    </alternativeName>
    <alternativeName>
        <fullName>tRNA 3 endonuclease 2</fullName>
    </alternativeName>
    <alternativeName>
        <fullName>tRNase Z 2</fullName>
    </alternativeName>
</protein>
<dbReference type="EC" id="3.1.26.11"/>
<dbReference type="EMBL" id="AF308694">
    <property type="protein sequence ID" value="AAG24916.1"/>
    <property type="molecule type" value="mRNA"/>
</dbReference>
<dbReference type="RefSeq" id="NP_001266674.1">
    <property type="nucleotide sequence ID" value="NM_001279745.1"/>
</dbReference>
<dbReference type="SMR" id="Q9GL73"/>
<dbReference type="FunCoup" id="Q9GL73">
    <property type="interactions" value="3498"/>
</dbReference>
<dbReference type="STRING" id="9593.ENSGGOP00000015469"/>
<dbReference type="GeneID" id="101145069"/>
<dbReference type="KEGG" id="ggo:101145069"/>
<dbReference type="CTD" id="60528"/>
<dbReference type="eggNOG" id="KOG2121">
    <property type="taxonomic scope" value="Eukaryota"/>
</dbReference>
<dbReference type="InParanoid" id="Q9GL73"/>
<dbReference type="OrthoDB" id="6495at9604"/>
<dbReference type="Proteomes" id="UP000001519">
    <property type="component" value="Unplaced"/>
</dbReference>
<dbReference type="GO" id="GO:0042645">
    <property type="term" value="C:mitochondrial nucleoid"/>
    <property type="evidence" value="ECO:0000250"/>
    <property type="project" value="UniProtKB"/>
</dbReference>
<dbReference type="GO" id="GO:0005739">
    <property type="term" value="C:mitochondrion"/>
    <property type="evidence" value="ECO:0000250"/>
    <property type="project" value="UniProtKB"/>
</dbReference>
<dbReference type="GO" id="GO:0005634">
    <property type="term" value="C:nucleus"/>
    <property type="evidence" value="ECO:0000250"/>
    <property type="project" value="UniProtKB"/>
</dbReference>
<dbReference type="GO" id="GO:0042781">
    <property type="term" value="F:3'-tRNA processing endoribonuclease activity"/>
    <property type="evidence" value="ECO:0000318"/>
    <property type="project" value="GO_Central"/>
</dbReference>
<dbReference type="GO" id="GO:0046872">
    <property type="term" value="F:metal ion binding"/>
    <property type="evidence" value="ECO:0007669"/>
    <property type="project" value="UniProtKB-KW"/>
</dbReference>
<dbReference type="GO" id="GO:1990180">
    <property type="term" value="P:mitochondrial tRNA 3'-end processing"/>
    <property type="evidence" value="ECO:0000250"/>
    <property type="project" value="UniProtKB"/>
</dbReference>
<dbReference type="CDD" id="cd07718">
    <property type="entry name" value="RNaseZ_ELAC1_ELAC2-C-term-like_MBL-fold"/>
    <property type="match status" value="1"/>
</dbReference>
<dbReference type="CDD" id="cd16296">
    <property type="entry name" value="RNaseZ_ELAC2-N-term-like_MBL-fold"/>
    <property type="match status" value="1"/>
</dbReference>
<dbReference type="FunFam" id="3.60.15.10:FF:000014">
    <property type="entry name" value="Zinc phosphodiesterase ELAC protein 2"/>
    <property type="match status" value="1"/>
</dbReference>
<dbReference type="Gene3D" id="3.60.15.10">
    <property type="entry name" value="Ribonuclease Z/Hydroxyacylglutathione hydrolase-like"/>
    <property type="match status" value="2"/>
</dbReference>
<dbReference type="InterPro" id="IPR001279">
    <property type="entry name" value="Metallo-B-lactamas"/>
</dbReference>
<dbReference type="InterPro" id="IPR036866">
    <property type="entry name" value="RibonucZ/Hydroxyglut_hydro"/>
</dbReference>
<dbReference type="InterPro" id="IPR047151">
    <property type="entry name" value="RNZ2-like"/>
</dbReference>
<dbReference type="InterPro" id="IPR027794">
    <property type="entry name" value="tRNase_Z_dom"/>
</dbReference>
<dbReference type="PANTHER" id="PTHR12553">
    <property type="entry name" value="ZINC PHOSPHODIESTERASE ELAC PROTEIN 2"/>
    <property type="match status" value="1"/>
</dbReference>
<dbReference type="PANTHER" id="PTHR12553:SF49">
    <property type="entry name" value="ZINC PHOSPHODIESTERASE ELAC PROTEIN 2"/>
    <property type="match status" value="1"/>
</dbReference>
<dbReference type="Pfam" id="PF12706">
    <property type="entry name" value="Lactamase_B_2"/>
    <property type="match status" value="1"/>
</dbReference>
<dbReference type="Pfam" id="PF13691">
    <property type="entry name" value="Lactamase_B_4"/>
    <property type="match status" value="1"/>
</dbReference>
<dbReference type="SUPFAM" id="SSF56281">
    <property type="entry name" value="Metallo-hydrolase/oxidoreductase"/>
    <property type="match status" value="2"/>
</dbReference>
<reference key="1">
    <citation type="journal article" date="2001" name="Nat. Genet.">
        <title>A candidate prostate cancer susceptibility gene at chromosome 17p.</title>
        <authorList>
            <person name="Tavtigian S.V."/>
            <person name="Simard J."/>
            <person name="Teng D.H.F."/>
            <person name="Abtin V."/>
            <person name="Baumgard M."/>
            <person name="Beck A."/>
            <person name="Camp N.J."/>
            <person name="Carillo A.R."/>
            <person name="Chen Y."/>
            <person name="Dayananth P."/>
            <person name="Desrochers M."/>
            <person name="Dumont M."/>
            <person name="Farnham J.M."/>
            <person name="Frank D."/>
            <person name="Frye C."/>
            <person name="Ghaffari S."/>
            <person name="Gupte J.S."/>
            <person name="Hu R."/>
            <person name="Iliev D."/>
            <person name="Janecki T."/>
            <person name="Kort E.N."/>
            <person name="Laity K.E."/>
            <person name="Leavitt A."/>
            <person name="Leblanc G."/>
            <person name="McArthur-Morrison J."/>
            <person name="Pederson A."/>
            <person name="Penn B."/>
            <person name="Peterson K.T."/>
            <person name="Reid J.E."/>
            <person name="Richards S."/>
            <person name="Schroeder M."/>
            <person name="Smith R."/>
            <person name="Snyder S.C."/>
            <person name="Swedlund B."/>
            <person name="Swensen J."/>
            <person name="Thomas A."/>
            <person name="Tranchant M."/>
            <person name="Woodland A.-M."/>
            <person name="Labrie F."/>
            <person name="Skolnick M.H."/>
            <person name="Neuhausen S."/>
            <person name="Rommens J."/>
            <person name="Cannon-Albright L.A."/>
        </authorList>
    </citation>
    <scope>NUCLEOTIDE SEQUENCE [MRNA]</scope>
</reference>
<sequence>MWALCSLLRSAAGRTMSQGRTISQAPARRERPRKDPLRHLRTREKRGPSGCSGGPNTVYLQVVAAGSRDSGAALYVFSEFNRYLFNCGEGVQRLMQEHKLKVVRLDNIFLTRMHWSNVGGLSGMILTLKETGLPKCVLSGPPQLEKYLEAIKIFSGPLKGIELAVRPHSAPEYEDETMTVYQIPIHSEQRRGRHQPWQSPERPLSRLSPERSSDSESNENEPHLPHGVSQRRGVRDSSLVVAFICKLHLKRGNFLVLKAKEMGLPVGTAAIAPIIAAVKDGKSITHEGREILAEELCTPPDPGAAFVVVECPDESFIQPICENATFQRYQGKADAPVALVVHMAPESVLVDSRYQQWMERFGPDTQHLVLNENCASVHNLRSHKIQTQLNLIHPDIFPLLTSFPCKKEGPTLSVPMVQGECLLKYQLRPRREWQRDAIITCNPEEFIVEALQLPNFQQSVQEYRRSVQDVPAPAEKRSQYPEIIFLGTGSAIPMKIRNVSATLVNISPDTSLLLDCGEGTFGQLCRHYGDQVDRVLGTLAAVFVSHLHADHHTGLLNILLQREQALASLGKPLHPLLVVAPSQLKAWLQQYHNQCQEVLHHISMIPAKCLQEGAEISSPAVERLISSLLRTCDLEEFQTCLVRHCKHAFGCALVHTSGWKVVYSGDTMPCEALVRMGKDATLLIHEATLEDGLEEEAVEKTHSTTSQAISVGMRMNAEFIMLNHFSQRYAKVPLFSPNFNEKVGVAFDHMKVCFGDFPTMPKLIPPLKALFAGDIEEMEERREKRELRQVRAALLSGELAGGLEDGEPQQKRAHTEEPQAKKVRAQ</sequence>
<proteinExistence type="evidence at transcript level"/>
<evidence type="ECO:0000250" key="1"/>
<evidence type="ECO:0000250" key="2">
    <source>
        <dbReference type="UniProtKB" id="Q9BQ52"/>
    </source>
</evidence>
<evidence type="ECO:0000255" key="3"/>
<evidence type="ECO:0000256" key="4">
    <source>
        <dbReference type="SAM" id="MobiDB-lite"/>
    </source>
</evidence>
<evidence type="ECO:0000305" key="5"/>
<accession>Q9GL73</accession>
<feature type="transit peptide" description="Mitochondrion" evidence="3">
    <location>
        <begin position="1"/>
        <end position="16"/>
    </location>
</feature>
<feature type="chain" id="PRO_0000155827" description="Zinc phosphodiesterase ELAC protein 2">
    <location>
        <begin position="17"/>
        <end position="826"/>
    </location>
</feature>
<feature type="region of interest" description="Disordered" evidence="4">
    <location>
        <begin position="15"/>
        <end position="51"/>
    </location>
</feature>
<feature type="region of interest" description="Disordered" evidence="4">
    <location>
        <begin position="189"/>
        <end position="231"/>
    </location>
</feature>
<feature type="region of interest" description="Disordered" evidence="4">
    <location>
        <begin position="798"/>
        <end position="826"/>
    </location>
</feature>
<feature type="compositionally biased region" description="Polar residues" evidence="4">
    <location>
        <begin position="15"/>
        <end position="24"/>
    </location>
</feature>
<feature type="compositionally biased region" description="Basic and acidic residues" evidence="4">
    <location>
        <begin position="27"/>
        <end position="38"/>
    </location>
</feature>
<feature type="compositionally biased region" description="Basic and acidic residues" evidence="4">
    <location>
        <begin position="208"/>
        <end position="224"/>
    </location>
</feature>
<feature type="compositionally biased region" description="Basic and acidic residues" evidence="4">
    <location>
        <begin position="808"/>
        <end position="820"/>
    </location>
</feature>
<feature type="modified residue" description="Phosphoserine" evidence="2">
    <location>
        <position position="199"/>
    </location>
</feature>
<feature type="modified residue" description="Phosphoserine" evidence="2">
    <location>
        <position position="208"/>
    </location>
</feature>
<feature type="modified residue" description="Phosphoserine" evidence="2">
    <location>
        <position position="212"/>
    </location>
</feature>
<feature type="modified residue" description="Phosphoserine" evidence="2">
    <location>
        <position position="229"/>
    </location>
</feature>
<feature type="modified residue" description="Phosphoserine" evidence="2">
    <location>
        <position position="618"/>
    </location>
</feature>
<feature type="modified residue" description="Phosphoserine" evidence="2">
    <location>
        <position position="736"/>
    </location>
</feature>
<keyword id="KW-0255">Endonuclease</keyword>
<keyword id="KW-0378">Hydrolase</keyword>
<keyword id="KW-0479">Metal-binding</keyword>
<keyword id="KW-0496">Mitochondrion</keyword>
<keyword id="KW-1135">Mitochondrion nucleoid</keyword>
<keyword id="KW-0540">Nuclease</keyword>
<keyword id="KW-0539">Nucleus</keyword>
<keyword id="KW-0597">Phosphoprotein</keyword>
<keyword id="KW-1185">Reference proteome</keyword>
<keyword id="KW-0809">Transit peptide</keyword>
<keyword id="KW-0819">tRNA processing</keyword>
<keyword id="KW-0862">Zinc</keyword>